<comment type="function">
    <text evidence="1">Catalyzes the reversible phosphorylation of UMP to UDP.</text>
</comment>
<comment type="catalytic activity">
    <reaction evidence="1">
        <text>UMP + ATP = UDP + ADP</text>
        <dbReference type="Rhea" id="RHEA:24400"/>
        <dbReference type="ChEBI" id="CHEBI:30616"/>
        <dbReference type="ChEBI" id="CHEBI:57865"/>
        <dbReference type="ChEBI" id="CHEBI:58223"/>
        <dbReference type="ChEBI" id="CHEBI:456216"/>
        <dbReference type="EC" id="2.7.4.22"/>
    </reaction>
</comment>
<comment type="activity regulation">
    <text evidence="1">Allosterically activated by GTP. Inhibited by UTP.</text>
</comment>
<comment type="pathway">
    <text evidence="1">Pyrimidine metabolism; CTP biosynthesis via de novo pathway; UDP from UMP (UMPK route): step 1/1.</text>
</comment>
<comment type="subunit">
    <text evidence="1">Homohexamer.</text>
</comment>
<comment type="subcellular location">
    <subcellularLocation>
        <location evidence="1">Cytoplasm</location>
    </subcellularLocation>
</comment>
<comment type="similarity">
    <text evidence="1">Belongs to the UMP kinase family.</text>
</comment>
<dbReference type="EC" id="2.7.4.22" evidence="1"/>
<dbReference type="EMBL" id="CP000758">
    <property type="protein sequence ID" value="ABS14747.1"/>
    <property type="molecule type" value="Genomic_DNA"/>
</dbReference>
<dbReference type="RefSeq" id="WP_010659978.1">
    <property type="nucleotide sequence ID" value="NC_009667.1"/>
</dbReference>
<dbReference type="SMR" id="A6X0J3"/>
<dbReference type="STRING" id="439375.Oant_2031"/>
<dbReference type="GeneID" id="61317512"/>
<dbReference type="KEGG" id="oan:Oant_2031"/>
<dbReference type="eggNOG" id="COG0528">
    <property type="taxonomic scope" value="Bacteria"/>
</dbReference>
<dbReference type="HOGENOM" id="CLU_033861_0_0_5"/>
<dbReference type="PhylomeDB" id="A6X0J3"/>
<dbReference type="UniPathway" id="UPA00159">
    <property type="reaction ID" value="UER00275"/>
</dbReference>
<dbReference type="Proteomes" id="UP000002301">
    <property type="component" value="Chromosome 1"/>
</dbReference>
<dbReference type="GO" id="GO:0005829">
    <property type="term" value="C:cytosol"/>
    <property type="evidence" value="ECO:0007669"/>
    <property type="project" value="TreeGrafter"/>
</dbReference>
<dbReference type="GO" id="GO:0005524">
    <property type="term" value="F:ATP binding"/>
    <property type="evidence" value="ECO:0007669"/>
    <property type="project" value="UniProtKB-KW"/>
</dbReference>
<dbReference type="GO" id="GO:0033862">
    <property type="term" value="F:UMP kinase activity"/>
    <property type="evidence" value="ECO:0007669"/>
    <property type="project" value="UniProtKB-EC"/>
</dbReference>
<dbReference type="GO" id="GO:0044210">
    <property type="term" value="P:'de novo' CTP biosynthetic process"/>
    <property type="evidence" value="ECO:0007669"/>
    <property type="project" value="UniProtKB-UniRule"/>
</dbReference>
<dbReference type="GO" id="GO:0006225">
    <property type="term" value="P:UDP biosynthetic process"/>
    <property type="evidence" value="ECO:0007669"/>
    <property type="project" value="TreeGrafter"/>
</dbReference>
<dbReference type="CDD" id="cd04254">
    <property type="entry name" value="AAK_UMPK-PyrH-Ec"/>
    <property type="match status" value="1"/>
</dbReference>
<dbReference type="FunFam" id="3.40.1160.10:FF:000001">
    <property type="entry name" value="Uridylate kinase"/>
    <property type="match status" value="1"/>
</dbReference>
<dbReference type="Gene3D" id="3.40.1160.10">
    <property type="entry name" value="Acetylglutamate kinase-like"/>
    <property type="match status" value="1"/>
</dbReference>
<dbReference type="HAMAP" id="MF_01220_B">
    <property type="entry name" value="PyrH_B"/>
    <property type="match status" value="1"/>
</dbReference>
<dbReference type="InterPro" id="IPR036393">
    <property type="entry name" value="AceGlu_kinase-like_sf"/>
</dbReference>
<dbReference type="InterPro" id="IPR001048">
    <property type="entry name" value="Asp/Glu/Uridylate_kinase"/>
</dbReference>
<dbReference type="InterPro" id="IPR011817">
    <property type="entry name" value="Uridylate_kinase"/>
</dbReference>
<dbReference type="InterPro" id="IPR015963">
    <property type="entry name" value="Uridylate_kinase_bac"/>
</dbReference>
<dbReference type="NCBIfam" id="TIGR02075">
    <property type="entry name" value="pyrH_bact"/>
    <property type="match status" value="1"/>
</dbReference>
<dbReference type="PANTHER" id="PTHR42833">
    <property type="entry name" value="URIDYLATE KINASE"/>
    <property type="match status" value="1"/>
</dbReference>
<dbReference type="PANTHER" id="PTHR42833:SF4">
    <property type="entry name" value="URIDYLATE KINASE PUMPKIN, CHLOROPLASTIC"/>
    <property type="match status" value="1"/>
</dbReference>
<dbReference type="Pfam" id="PF00696">
    <property type="entry name" value="AA_kinase"/>
    <property type="match status" value="1"/>
</dbReference>
<dbReference type="PIRSF" id="PIRSF005650">
    <property type="entry name" value="Uridylate_kin"/>
    <property type="match status" value="1"/>
</dbReference>
<dbReference type="SUPFAM" id="SSF53633">
    <property type="entry name" value="Carbamate kinase-like"/>
    <property type="match status" value="1"/>
</dbReference>
<proteinExistence type="inferred from homology"/>
<reference key="1">
    <citation type="journal article" date="2011" name="J. Bacteriol.">
        <title>Genome of Ochrobactrum anthropi ATCC 49188 T, a versatile opportunistic pathogen and symbiont of several eukaryotic hosts.</title>
        <authorList>
            <person name="Chain P.S."/>
            <person name="Lang D.M."/>
            <person name="Comerci D.J."/>
            <person name="Malfatti S.A."/>
            <person name="Vergez L.M."/>
            <person name="Shin M."/>
            <person name="Ugalde R.A."/>
            <person name="Garcia E."/>
            <person name="Tolmasky M.E."/>
        </authorList>
    </citation>
    <scope>NUCLEOTIDE SEQUENCE [LARGE SCALE GENOMIC DNA]</scope>
    <source>
        <strain>ATCC 49188 / DSM 6882 / CCUG 24695 / JCM 21032 / LMG 3331 / NBRC 15819 / NCTC 12168 / Alc 37</strain>
    </source>
</reference>
<sequence length="240" mass="25048">MSGKPAYKRVLLKASGEALMGSQGFGIDVSVADRIANDIKQARSLGVEVGVVIGGGNIFRGVAVASKGGDRVTGDHMGMLATVINSLALRTSLHKIGVDSVVLSAIAMPEICESFSQRQATAYMDEGKVVIFAGGTGNPFFTTDSAAALRAAEIEADALLKGTQVDGIYSADPKKDPNATRFDSLTHKEVLDRGLAVMDTAAVALARENNIPIIVYSIHENGGLAEILQGKGRCTIVSDN</sequence>
<name>PYRH_BRUA4</name>
<accession>A6X0J3</accession>
<keyword id="KW-0021">Allosteric enzyme</keyword>
<keyword id="KW-0067">ATP-binding</keyword>
<keyword id="KW-0963">Cytoplasm</keyword>
<keyword id="KW-0418">Kinase</keyword>
<keyword id="KW-0547">Nucleotide-binding</keyword>
<keyword id="KW-0665">Pyrimidine biosynthesis</keyword>
<keyword id="KW-1185">Reference proteome</keyword>
<keyword id="KW-0808">Transferase</keyword>
<gene>
    <name evidence="1" type="primary">pyrH</name>
    <name type="ordered locus">Oant_2031</name>
</gene>
<feature type="chain" id="PRO_1000053969" description="Uridylate kinase">
    <location>
        <begin position="1"/>
        <end position="240"/>
    </location>
</feature>
<feature type="region of interest" description="Involved in allosteric activation by GTP" evidence="1">
    <location>
        <begin position="21"/>
        <end position="26"/>
    </location>
</feature>
<feature type="binding site" evidence="1">
    <location>
        <begin position="13"/>
        <end position="16"/>
    </location>
    <ligand>
        <name>ATP</name>
        <dbReference type="ChEBI" id="CHEBI:30616"/>
    </ligand>
</feature>
<feature type="binding site" evidence="1">
    <location>
        <position position="55"/>
    </location>
    <ligand>
        <name>UMP</name>
        <dbReference type="ChEBI" id="CHEBI:57865"/>
    </ligand>
</feature>
<feature type="binding site" evidence="1">
    <location>
        <position position="56"/>
    </location>
    <ligand>
        <name>ATP</name>
        <dbReference type="ChEBI" id="CHEBI:30616"/>
    </ligand>
</feature>
<feature type="binding site" evidence="1">
    <location>
        <position position="60"/>
    </location>
    <ligand>
        <name>ATP</name>
        <dbReference type="ChEBI" id="CHEBI:30616"/>
    </ligand>
</feature>
<feature type="binding site" evidence="1">
    <location>
        <position position="75"/>
    </location>
    <ligand>
        <name>UMP</name>
        <dbReference type="ChEBI" id="CHEBI:57865"/>
    </ligand>
</feature>
<feature type="binding site" evidence="1">
    <location>
        <begin position="136"/>
        <end position="143"/>
    </location>
    <ligand>
        <name>UMP</name>
        <dbReference type="ChEBI" id="CHEBI:57865"/>
    </ligand>
</feature>
<feature type="binding site" evidence="1">
    <location>
        <position position="163"/>
    </location>
    <ligand>
        <name>ATP</name>
        <dbReference type="ChEBI" id="CHEBI:30616"/>
    </ligand>
</feature>
<feature type="binding site" evidence="1">
    <location>
        <position position="164"/>
    </location>
    <ligand>
        <name>ATP</name>
        <dbReference type="ChEBI" id="CHEBI:30616"/>
    </ligand>
</feature>
<feature type="binding site" evidence="1">
    <location>
        <position position="169"/>
    </location>
    <ligand>
        <name>ATP</name>
        <dbReference type="ChEBI" id="CHEBI:30616"/>
    </ligand>
</feature>
<feature type="binding site" evidence="1">
    <location>
        <position position="172"/>
    </location>
    <ligand>
        <name>ATP</name>
        <dbReference type="ChEBI" id="CHEBI:30616"/>
    </ligand>
</feature>
<organism>
    <name type="scientific">Brucella anthropi (strain ATCC 49188 / DSM 6882 / CCUG 24695 / JCM 21032 / LMG 3331 / NBRC 15819 / NCTC 12168 / Alc 37)</name>
    <name type="common">Ochrobactrum anthropi</name>
    <dbReference type="NCBI Taxonomy" id="439375"/>
    <lineage>
        <taxon>Bacteria</taxon>
        <taxon>Pseudomonadati</taxon>
        <taxon>Pseudomonadota</taxon>
        <taxon>Alphaproteobacteria</taxon>
        <taxon>Hyphomicrobiales</taxon>
        <taxon>Brucellaceae</taxon>
        <taxon>Brucella/Ochrobactrum group</taxon>
        <taxon>Brucella</taxon>
    </lineage>
</organism>
<protein>
    <recommendedName>
        <fullName evidence="1">Uridylate kinase</fullName>
        <shortName evidence="1">UK</shortName>
        <ecNumber evidence="1">2.7.4.22</ecNumber>
    </recommendedName>
    <alternativeName>
        <fullName evidence="1">Uridine monophosphate kinase</fullName>
        <shortName evidence="1">UMP kinase</shortName>
        <shortName evidence="1">UMPK</shortName>
    </alternativeName>
</protein>
<evidence type="ECO:0000255" key="1">
    <source>
        <dbReference type="HAMAP-Rule" id="MF_01220"/>
    </source>
</evidence>